<comment type="function">
    <text evidence="1">Part of the ABC transporter complex BtuCDF involved in vitamin B12 import. Responsible for energy coupling to the transport system.</text>
</comment>
<comment type="catalytic activity">
    <reaction evidence="1">
        <text>an R-cob(III)alamin(out) + ATP + H2O = an R-cob(III)alamin(in) + ADP + phosphate + H(+)</text>
        <dbReference type="Rhea" id="RHEA:17873"/>
        <dbReference type="ChEBI" id="CHEBI:15377"/>
        <dbReference type="ChEBI" id="CHEBI:15378"/>
        <dbReference type="ChEBI" id="CHEBI:30616"/>
        <dbReference type="ChEBI" id="CHEBI:43474"/>
        <dbReference type="ChEBI" id="CHEBI:140785"/>
        <dbReference type="ChEBI" id="CHEBI:456216"/>
        <dbReference type="EC" id="7.6.2.8"/>
    </reaction>
</comment>
<comment type="subunit">
    <text evidence="1">The complex is composed of two ATP-binding proteins (BtuD), two transmembrane proteins (BtuC) and a solute-binding protein (BtuF).</text>
</comment>
<comment type="subcellular location">
    <subcellularLocation>
        <location evidence="1">Cell inner membrane</location>
        <topology evidence="1">Peripheral membrane protein</topology>
    </subcellularLocation>
</comment>
<comment type="similarity">
    <text evidence="1">Belongs to the ABC transporter superfamily. Vitamin B12 importer (TC 3.A.1.13.1) family.</text>
</comment>
<dbReference type="EC" id="7.6.2.8" evidence="1"/>
<dbReference type="EMBL" id="CP000822">
    <property type="protein sequence ID" value="ABV12864.1"/>
    <property type="molecule type" value="Genomic_DNA"/>
</dbReference>
<dbReference type="RefSeq" id="WP_012132603.1">
    <property type="nucleotide sequence ID" value="NC_009792.1"/>
</dbReference>
<dbReference type="SMR" id="A8AHA1"/>
<dbReference type="STRING" id="290338.CKO_01735"/>
<dbReference type="GeneID" id="45135761"/>
<dbReference type="KEGG" id="cko:CKO_01735"/>
<dbReference type="HOGENOM" id="CLU_000604_1_11_6"/>
<dbReference type="OrthoDB" id="5292475at2"/>
<dbReference type="Proteomes" id="UP000008148">
    <property type="component" value="Chromosome"/>
</dbReference>
<dbReference type="GO" id="GO:0005886">
    <property type="term" value="C:plasma membrane"/>
    <property type="evidence" value="ECO:0007669"/>
    <property type="project" value="UniProtKB-SubCell"/>
</dbReference>
<dbReference type="GO" id="GO:0015420">
    <property type="term" value="F:ABC-type vitamin B12 transporter activity"/>
    <property type="evidence" value="ECO:0007669"/>
    <property type="project" value="UniProtKB-UniRule"/>
</dbReference>
<dbReference type="GO" id="GO:0005524">
    <property type="term" value="F:ATP binding"/>
    <property type="evidence" value="ECO:0007669"/>
    <property type="project" value="UniProtKB-KW"/>
</dbReference>
<dbReference type="GO" id="GO:0016887">
    <property type="term" value="F:ATP hydrolysis activity"/>
    <property type="evidence" value="ECO:0007669"/>
    <property type="project" value="InterPro"/>
</dbReference>
<dbReference type="CDD" id="cd03214">
    <property type="entry name" value="ABC_Iron-Siderophores_B12_Hemin"/>
    <property type="match status" value="1"/>
</dbReference>
<dbReference type="FunFam" id="3.40.50.300:FF:000462">
    <property type="entry name" value="Vitamin B12 import ATP-binding protein BtuD"/>
    <property type="match status" value="1"/>
</dbReference>
<dbReference type="Gene3D" id="3.40.50.300">
    <property type="entry name" value="P-loop containing nucleotide triphosphate hydrolases"/>
    <property type="match status" value="1"/>
</dbReference>
<dbReference type="HAMAP" id="MF_01005">
    <property type="entry name" value="BtuD"/>
    <property type="match status" value="1"/>
</dbReference>
<dbReference type="InterPro" id="IPR003593">
    <property type="entry name" value="AAA+_ATPase"/>
</dbReference>
<dbReference type="InterPro" id="IPR003439">
    <property type="entry name" value="ABC_transporter-like_ATP-bd"/>
</dbReference>
<dbReference type="InterPro" id="IPR017871">
    <property type="entry name" value="ABC_transporter-like_CS"/>
</dbReference>
<dbReference type="InterPro" id="IPR023693">
    <property type="entry name" value="ABC_transptr_BtuD"/>
</dbReference>
<dbReference type="InterPro" id="IPR050153">
    <property type="entry name" value="Metal_Ion_Import_ABC"/>
</dbReference>
<dbReference type="InterPro" id="IPR027417">
    <property type="entry name" value="P-loop_NTPase"/>
</dbReference>
<dbReference type="NCBIfam" id="NF002981">
    <property type="entry name" value="PRK03695.1"/>
    <property type="match status" value="1"/>
</dbReference>
<dbReference type="PANTHER" id="PTHR42734">
    <property type="entry name" value="METAL TRANSPORT SYSTEM ATP-BINDING PROTEIN TM_0124-RELATED"/>
    <property type="match status" value="1"/>
</dbReference>
<dbReference type="PANTHER" id="PTHR42734:SF18">
    <property type="entry name" value="VITAMIN B12 IMPORT ATP-BINDING PROTEIN BTUD"/>
    <property type="match status" value="1"/>
</dbReference>
<dbReference type="Pfam" id="PF00005">
    <property type="entry name" value="ABC_tran"/>
    <property type="match status" value="1"/>
</dbReference>
<dbReference type="SMART" id="SM00382">
    <property type="entry name" value="AAA"/>
    <property type="match status" value="1"/>
</dbReference>
<dbReference type="SUPFAM" id="SSF52540">
    <property type="entry name" value="P-loop containing nucleoside triphosphate hydrolases"/>
    <property type="match status" value="1"/>
</dbReference>
<dbReference type="PROSITE" id="PS00211">
    <property type="entry name" value="ABC_TRANSPORTER_1"/>
    <property type="match status" value="1"/>
</dbReference>
<dbReference type="PROSITE" id="PS50893">
    <property type="entry name" value="ABC_TRANSPORTER_2"/>
    <property type="match status" value="1"/>
</dbReference>
<sequence length="249" mass="27275">MISLMQLQDVAETTRLGPLSGDVKPGEILHLVGPNGAGKSTLLARMAGLTFGEGTVIFDGASLETWPAAKLAQHRAYLAQQQNPPFSMPVWHFLTLHQPDKTQTNLLNDVAQALGLSDKLGRSANQLSGGEWQRVRLAAVILQIHPHANPHGQLLLLDEPMNSLDVAQQNALDRLLSQLCSQGIAIVMSSHDLNHTLRHAHRAWLLKQGKLIASGRRDEVLTPPNLAQAYGMNFRRLDVEGHRMLISTT</sequence>
<accession>A8AHA1</accession>
<name>BTUD_CITK8</name>
<proteinExistence type="inferred from homology"/>
<reference key="1">
    <citation type="submission" date="2007-08" db="EMBL/GenBank/DDBJ databases">
        <authorList>
            <consortium name="The Citrobacter koseri Genome Sequencing Project"/>
            <person name="McClelland M."/>
            <person name="Sanderson E.K."/>
            <person name="Porwollik S."/>
            <person name="Spieth J."/>
            <person name="Clifton W.S."/>
            <person name="Latreille P."/>
            <person name="Courtney L."/>
            <person name="Wang C."/>
            <person name="Pepin K."/>
            <person name="Bhonagiri V."/>
            <person name="Nash W."/>
            <person name="Johnson M."/>
            <person name="Thiruvilangam P."/>
            <person name="Wilson R."/>
        </authorList>
    </citation>
    <scope>NUCLEOTIDE SEQUENCE [LARGE SCALE GENOMIC DNA]</scope>
    <source>
        <strain>ATCC BAA-895 / CDC 4225-83 / SGSC4696</strain>
    </source>
</reference>
<keyword id="KW-0067">ATP-binding</keyword>
<keyword id="KW-0997">Cell inner membrane</keyword>
<keyword id="KW-1003">Cell membrane</keyword>
<keyword id="KW-0472">Membrane</keyword>
<keyword id="KW-0547">Nucleotide-binding</keyword>
<keyword id="KW-1185">Reference proteome</keyword>
<keyword id="KW-1278">Translocase</keyword>
<keyword id="KW-0813">Transport</keyword>
<feature type="chain" id="PRO_1000083958" description="Vitamin B12 import ATP-binding protein BtuD">
    <location>
        <begin position="1"/>
        <end position="249"/>
    </location>
</feature>
<feature type="domain" description="ABC transporter" evidence="1">
    <location>
        <begin position="5"/>
        <end position="233"/>
    </location>
</feature>
<feature type="binding site" evidence="1">
    <location>
        <begin position="33"/>
        <end position="40"/>
    </location>
    <ligand>
        <name>ATP</name>
        <dbReference type="ChEBI" id="CHEBI:30616"/>
    </ligand>
</feature>
<protein>
    <recommendedName>
        <fullName evidence="1">Vitamin B12 import ATP-binding protein BtuD</fullName>
        <ecNumber evidence="1">7.6.2.8</ecNumber>
    </recommendedName>
    <alternativeName>
        <fullName evidence="1">Vitamin B12-transporting ATPase</fullName>
    </alternativeName>
</protein>
<gene>
    <name evidence="1" type="primary">btuD</name>
    <name type="ordered locus">CKO_01735</name>
</gene>
<evidence type="ECO:0000255" key="1">
    <source>
        <dbReference type="HAMAP-Rule" id="MF_01005"/>
    </source>
</evidence>
<organism>
    <name type="scientific">Citrobacter koseri (strain ATCC BAA-895 / CDC 4225-83 / SGSC4696)</name>
    <dbReference type="NCBI Taxonomy" id="290338"/>
    <lineage>
        <taxon>Bacteria</taxon>
        <taxon>Pseudomonadati</taxon>
        <taxon>Pseudomonadota</taxon>
        <taxon>Gammaproteobacteria</taxon>
        <taxon>Enterobacterales</taxon>
        <taxon>Enterobacteriaceae</taxon>
        <taxon>Citrobacter</taxon>
    </lineage>
</organism>